<sequence>MYKIQLLSCIALTLALVANGAPTSSSTGNTMKEVKSLLLDLQLLLEKVKNPENLKLSRMHTFNFYMPKVNATELKHLKCLLEELKLLEEVLDLAPSKNLNTREIKDSMDNIKRIVLELQGSETRFTCEYDDATVKAVEFLNKWITFCQSIYSTMT</sequence>
<feature type="signal peptide" evidence="1">
    <location>
        <begin position="1"/>
        <end position="20"/>
    </location>
</feature>
<feature type="chain" id="PRO_0000015502" description="Interleukin-2">
    <location>
        <begin position="21"/>
        <end position="155"/>
    </location>
</feature>
<feature type="glycosylation site" description="O-linked (GalNAc...) threonine" evidence="1">
    <location>
        <position position="23"/>
    </location>
</feature>
<feature type="disulfide bond" evidence="1">
    <location>
        <begin position="79"/>
        <end position="127"/>
    </location>
</feature>
<feature type="sequence conflict" description="In Ref. 1; CAA37881." evidence="3" ref="1">
    <original>L</original>
    <variation>P</variation>
    <location>
        <position position="6"/>
    </location>
</feature>
<proteinExistence type="evidence at transcript level"/>
<reference key="1">
    <citation type="journal article" date="1990" name="Nucleic Acids Res.">
        <title>cDNA cloning of ovine interleukin 2 by PCR.</title>
        <authorList>
            <person name="Goodall J.C."/>
            <person name="Emery D.C."/>
            <person name="Perry A.C.F."/>
            <person name="English L.S."/>
            <person name="Hall L."/>
        </authorList>
    </citation>
    <scope>NUCLEOTIDE SEQUENCE [MRNA]</scope>
</reference>
<reference key="2">
    <citation type="journal article" date="1990" name="Nucleic Acids Res.">
        <title>The molecular cloning of ovine interleukin 2 gene by the polymerase chain reaction.</title>
        <authorList>
            <person name="Seow H.F."/>
            <person name="Rothel J.S."/>
            <person name="Radford A.J."/>
            <person name="Wood P.R."/>
        </authorList>
    </citation>
    <scope>NUCLEOTIDE SEQUENCE [MRNA]</scope>
</reference>
<reference key="3">
    <citation type="journal article" date="2000" name="J. Anim. Sci.">
        <title>A single-strand conformation polymorphism in the ovine interleukin-2 (IL-2) gene.</title>
        <authorList>
            <person name="Luehken G."/>
            <person name="Hiendleder S."/>
            <person name="Prinzenberg E.M."/>
            <person name="Erhardt G."/>
        </authorList>
    </citation>
    <scope>NUCLEOTIDE SEQUENCE [GENOMIC DNA]</scope>
</reference>
<reference key="4">
    <citation type="submission" date="2006-10" db="EMBL/GenBank/DDBJ databases">
        <title>Molecular characterization of Ovis aries IL2.</title>
        <authorList>
            <person name="Luehken G."/>
            <person name="Erhardt G."/>
        </authorList>
    </citation>
    <scope>NUCLEOTIDE SEQUENCE [GENOMIC DNA]</scope>
</reference>
<reference key="5">
    <citation type="journal article" date="1995" name="Cytokine">
        <title>Molecular cloning and expression of DNA encoding ovine interleukin 2.</title>
        <authorList>
            <person name="Bujdoso R."/>
            <person name="Williamson M.L."/>
            <person name="Roy D."/>
            <person name="Hunt P."/>
            <person name="Blacklaws B."/>
            <person name="Sargan D."/>
            <person name="McConnell I."/>
        </authorList>
    </citation>
    <scope>NUCLEOTIDE SEQUENCE [MRNA] OF 21-153</scope>
</reference>
<name>IL2_SHEEP</name>
<keyword id="KW-1064">Adaptive immunity</keyword>
<keyword id="KW-0202">Cytokine</keyword>
<keyword id="KW-1015">Disulfide bond</keyword>
<keyword id="KW-0325">Glycoprotein</keyword>
<keyword id="KW-0339">Growth factor</keyword>
<keyword id="KW-0391">Immunity</keyword>
<keyword id="KW-1185">Reference proteome</keyword>
<keyword id="KW-0964">Secreted</keyword>
<keyword id="KW-0732">Signal</keyword>
<evidence type="ECO:0000250" key="1"/>
<evidence type="ECO:0000250" key="2">
    <source>
        <dbReference type="UniProtKB" id="P60568"/>
    </source>
</evidence>
<evidence type="ECO:0000305" key="3"/>
<organism>
    <name type="scientific">Ovis aries</name>
    <name type="common">Sheep</name>
    <dbReference type="NCBI Taxonomy" id="9940"/>
    <lineage>
        <taxon>Eukaryota</taxon>
        <taxon>Metazoa</taxon>
        <taxon>Chordata</taxon>
        <taxon>Craniata</taxon>
        <taxon>Vertebrata</taxon>
        <taxon>Euteleostomi</taxon>
        <taxon>Mammalia</taxon>
        <taxon>Eutheria</taxon>
        <taxon>Laurasiatheria</taxon>
        <taxon>Artiodactyla</taxon>
        <taxon>Ruminantia</taxon>
        <taxon>Pecora</taxon>
        <taxon>Bovidae</taxon>
        <taxon>Caprinae</taxon>
        <taxon>Ovis</taxon>
    </lineage>
</organism>
<dbReference type="EMBL" id="X53934">
    <property type="protein sequence ID" value="CAA37881.1"/>
    <property type="molecule type" value="mRNA"/>
</dbReference>
<dbReference type="EMBL" id="X55641">
    <property type="protein sequence ID" value="CAA39165.1"/>
    <property type="molecule type" value="mRNA"/>
</dbReference>
<dbReference type="EMBL" id="AF287479">
    <property type="protein sequence ID" value="AAK69554.1"/>
    <property type="molecule type" value="Genomic_DNA"/>
</dbReference>
<dbReference type="EMBL" id="EF056466">
    <property type="protein sequence ID" value="ABK41601.1"/>
    <property type="molecule type" value="Genomic_DNA"/>
</dbReference>
<dbReference type="EMBL" id="X60148">
    <property type="protein sequence ID" value="CAA42722.1"/>
    <property type="molecule type" value="mRNA"/>
</dbReference>
<dbReference type="PIR" id="S11488">
    <property type="entry name" value="S11488"/>
</dbReference>
<dbReference type="RefSeq" id="NP_001009806.1">
    <property type="nucleotide sequence ID" value="NM_001009806.1"/>
</dbReference>
<dbReference type="SASBDB" id="P19114"/>
<dbReference type="SMR" id="P19114"/>
<dbReference type="STRING" id="9940.ENSOARP00000000019"/>
<dbReference type="GlyCosmos" id="P19114">
    <property type="glycosylation" value="1 site, No reported glycans"/>
</dbReference>
<dbReference type="Ensembl" id="ENSOART00025015801">
    <property type="protein sequence ID" value="ENSOARP00025007936"/>
    <property type="gene ID" value="ENSOARG00025009599"/>
</dbReference>
<dbReference type="Ensembl" id="ENSOART00040016007">
    <property type="protein sequence ID" value="ENSOARP00040007667"/>
    <property type="gene ID" value="ENSOARG00040009979"/>
</dbReference>
<dbReference type="Ensembl" id="ENSOART00180040905">
    <property type="protein sequence ID" value="ENSOARP00180021039"/>
    <property type="gene ID" value="ENSOARG00180024716"/>
</dbReference>
<dbReference type="Ensembl" id="ENSOART00185040647">
    <property type="protein sequence ID" value="ENSOARP00185020033"/>
    <property type="gene ID" value="ENSOARG00185024714"/>
</dbReference>
<dbReference type="Ensembl" id="ENSOART00215018310">
    <property type="protein sequence ID" value="ENSOARP00215009079"/>
    <property type="gene ID" value="ENSOARG00215011068"/>
</dbReference>
<dbReference type="Ensembl" id="ENSOART00220071217">
    <property type="protein sequence ID" value="ENSOARP00220038439"/>
    <property type="gene ID" value="ENSOARG00220042830"/>
</dbReference>
<dbReference type="Ensembl" id="ENSOART00225033055">
    <property type="protein sequence ID" value="ENSOARP00225016193"/>
    <property type="gene ID" value="ENSOARG00225020073"/>
</dbReference>
<dbReference type="Ensembl" id="ENSOART00260038837">
    <property type="protein sequence ID" value="ENSOARP00260019555"/>
    <property type="gene ID" value="ENSOARG00260023842"/>
</dbReference>
<dbReference type="GeneID" id="443401"/>
<dbReference type="KEGG" id="oas:443401"/>
<dbReference type="CTD" id="3558"/>
<dbReference type="OrthoDB" id="9450228at2759"/>
<dbReference type="Proteomes" id="UP000002356">
    <property type="component" value="Unplaced"/>
</dbReference>
<dbReference type="GO" id="GO:0005615">
    <property type="term" value="C:extracellular space"/>
    <property type="evidence" value="ECO:0007669"/>
    <property type="project" value="UniProtKB-KW"/>
</dbReference>
<dbReference type="GO" id="GO:0005125">
    <property type="term" value="F:cytokine activity"/>
    <property type="evidence" value="ECO:0007669"/>
    <property type="project" value="UniProtKB-KW"/>
</dbReference>
<dbReference type="GO" id="GO:0008083">
    <property type="term" value="F:growth factor activity"/>
    <property type="evidence" value="ECO:0007669"/>
    <property type="project" value="UniProtKB-KW"/>
</dbReference>
<dbReference type="GO" id="GO:0005134">
    <property type="term" value="F:interleukin-2 receptor binding"/>
    <property type="evidence" value="ECO:0007669"/>
    <property type="project" value="Ensembl"/>
</dbReference>
<dbReference type="GO" id="GO:0002250">
    <property type="term" value="P:adaptive immune response"/>
    <property type="evidence" value="ECO:0007669"/>
    <property type="project" value="UniProtKB-KW"/>
</dbReference>
<dbReference type="GO" id="GO:0097696">
    <property type="term" value="P:cell surface receptor signaling pathway via STAT"/>
    <property type="evidence" value="ECO:0007669"/>
    <property type="project" value="Ensembl"/>
</dbReference>
<dbReference type="GO" id="GO:0038110">
    <property type="term" value="P:interleukin-2-mediated signaling pathway"/>
    <property type="evidence" value="ECO:0007669"/>
    <property type="project" value="Ensembl"/>
</dbReference>
<dbReference type="GO" id="GO:0002366">
    <property type="term" value="P:leukocyte activation involved in immune response"/>
    <property type="evidence" value="ECO:0007669"/>
    <property type="project" value="Ensembl"/>
</dbReference>
<dbReference type="GO" id="GO:0002903">
    <property type="term" value="P:negative regulation of B cell apoptotic process"/>
    <property type="evidence" value="ECO:0007669"/>
    <property type="project" value="Ensembl"/>
</dbReference>
<dbReference type="GO" id="GO:0042104">
    <property type="term" value="P:positive regulation of activated T cell proliferation"/>
    <property type="evidence" value="ECO:0007669"/>
    <property type="project" value="Ensembl"/>
</dbReference>
<dbReference type="GO" id="GO:0030890">
    <property type="term" value="P:positive regulation of B cell proliferation"/>
    <property type="evidence" value="ECO:0007669"/>
    <property type="project" value="Ensembl"/>
</dbReference>
<dbReference type="GO" id="GO:0002639">
    <property type="term" value="P:positive regulation of immunoglobulin production"/>
    <property type="evidence" value="ECO:0007669"/>
    <property type="project" value="Ensembl"/>
</dbReference>
<dbReference type="GO" id="GO:0032740">
    <property type="term" value="P:positive regulation of interleukin-17 production"/>
    <property type="evidence" value="ECO:0007669"/>
    <property type="project" value="Ensembl"/>
</dbReference>
<dbReference type="GO" id="GO:1900100">
    <property type="term" value="P:positive regulation of plasma cell differentiation"/>
    <property type="evidence" value="ECO:0007669"/>
    <property type="project" value="Ensembl"/>
</dbReference>
<dbReference type="Gene3D" id="1.20.1250.10">
    <property type="match status" value="1"/>
</dbReference>
<dbReference type="InterPro" id="IPR009079">
    <property type="entry name" value="4_helix_cytokine-like_core"/>
</dbReference>
<dbReference type="InterPro" id="IPR000779">
    <property type="entry name" value="IL-2"/>
</dbReference>
<dbReference type="InterPro" id="IPR030477">
    <property type="entry name" value="IL-2_CS"/>
</dbReference>
<dbReference type="PANTHER" id="PTHR48487">
    <property type="entry name" value="INTERLEUKIN-2"/>
    <property type="match status" value="1"/>
</dbReference>
<dbReference type="PANTHER" id="PTHR48487:SF1">
    <property type="entry name" value="INTERLEUKIN-2"/>
    <property type="match status" value="1"/>
</dbReference>
<dbReference type="Pfam" id="PF00715">
    <property type="entry name" value="IL2"/>
    <property type="match status" value="1"/>
</dbReference>
<dbReference type="PRINTS" id="PR00265">
    <property type="entry name" value="INTERLEUKIN2"/>
</dbReference>
<dbReference type="SMART" id="SM00189">
    <property type="entry name" value="IL2"/>
    <property type="match status" value="1"/>
</dbReference>
<dbReference type="SUPFAM" id="SSF47266">
    <property type="entry name" value="4-helical cytokines"/>
    <property type="match status" value="1"/>
</dbReference>
<dbReference type="PROSITE" id="PS00424">
    <property type="entry name" value="INTERLEUKIN_2"/>
    <property type="match status" value="1"/>
</dbReference>
<protein>
    <recommendedName>
        <fullName>Interleukin-2</fullName>
        <shortName>IL-2</shortName>
    </recommendedName>
    <alternativeName>
        <fullName>T-cell growth factor</fullName>
        <shortName>TCGF</shortName>
    </alternativeName>
</protein>
<gene>
    <name type="primary">IL2</name>
</gene>
<accession>P19114</accession>
<accession>A0MZP0</accession>
<accession>Q95MP4</accession>
<comment type="function">
    <text evidence="2">Cytokine produced by activated CD4-positive helper T-cells and to a lesser extend activated CD8-positive T-cells and natural killer (NK) cells that plays pivotal roles in the immune response and tolerance. Binds to a receptor complex composed of either the high-affinity trimeric IL-2R (IL2RA/CD25, IL2RB/CD122 and IL2RG/CD132) or the low-affinity dimeric IL-2R (IL2RB and IL2RG). Interaction with the receptor leads to oligomerization and conformation changes in the IL-2R subunits resulting in downstream signaling starting with phosphorylation of JAK1 and JAK3. In turn, JAK1 and JAK3 phosphorylate the receptor to form a docking site leading to the phosphorylation of several substrates including STAT5. This process leads to activation of several pathways including STAT, phosphoinositide-3-kinase/PI3K and mitogen-activated protein kinase/MAPK pathways. Functions as a T-cell growth factor and can increase NK-cell cytolytic activity as well. Promotes strong proliferation of activated B-cells and subsequently immunoglobulin production. Plays a pivotal role in regulating the adaptive immune system by controlling the survival and proliferation of regulatory T-cells, which are required for the maintenance of immune tolerance. Moreover, participates in the differentiation and homeostasis of effector T-cell subsets, including Th1, Th2, Th17 as well as memory CD8-positive T-cells.</text>
</comment>
<comment type="subcellular location">
    <subcellularLocation>
        <location>Secreted</location>
    </subcellularLocation>
</comment>
<comment type="similarity">
    <text evidence="3">Belongs to the IL-2 family.</text>
</comment>